<reference key="1">
    <citation type="journal article" date="1995" name="Gene">
        <title>Cloning and study of the genetic organization of the exe gene cluster of Aeromonas salmonicida.</title>
        <authorList>
            <person name="Karlyshev A.V."/>
            <person name="Macintyre S."/>
        </authorList>
    </citation>
    <scope>NUCLEOTIDE SEQUENCE [GENOMIC DNA]</scope>
    <source>
        <strain>ATCC 33658 / DSM 19634 / JCM 7874 / NCIMB 1102 / NCTC 12959</strain>
    </source>
</reference>
<evidence type="ECO:0000250" key="1">
    <source>
        <dbReference type="UniProtKB" id="E3PJ86"/>
    </source>
</evidence>
<evidence type="ECO:0000250" key="2">
    <source>
        <dbReference type="UniProtKB" id="P45779"/>
    </source>
</evidence>
<evidence type="ECO:0000255" key="3"/>
<evidence type="ECO:0000305" key="4"/>
<gene>
    <name type="primary">exeD</name>
</gene>
<accession>P45778</accession>
<dbReference type="EMBL" id="X80505">
    <property type="protein sequence ID" value="CAA56668.1"/>
    <property type="molecule type" value="Genomic_DNA"/>
</dbReference>
<dbReference type="PIR" id="I39678">
    <property type="entry name" value="S46963"/>
</dbReference>
<dbReference type="RefSeq" id="WP_005315865.1">
    <property type="nucleotide sequence ID" value="NZ_UFSF01000001.1"/>
</dbReference>
<dbReference type="SMR" id="P45778"/>
<dbReference type="STRING" id="1233098.GCA_000315855_00772"/>
<dbReference type="OMA" id="TFNVGQE"/>
<dbReference type="GO" id="GO:0009279">
    <property type="term" value="C:cell outer membrane"/>
    <property type="evidence" value="ECO:0007669"/>
    <property type="project" value="UniProtKB-SubCell"/>
</dbReference>
<dbReference type="GO" id="GO:0015627">
    <property type="term" value="C:type II protein secretion system complex"/>
    <property type="evidence" value="ECO:0007669"/>
    <property type="project" value="InterPro"/>
</dbReference>
<dbReference type="GO" id="GO:0015628">
    <property type="term" value="P:protein secretion by the type II secretion system"/>
    <property type="evidence" value="ECO:0007669"/>
    <property type="project" value="InterPro"/>
</dbReference>
<dbReference type="Gene3D" id="3.30.1370.120">
    <property type="match status" value="3"/>
</dbReference>
<dbReference type="InterPro" id="IPR050810">
    <property type="entry name" value="Bact_Secretion_Sys_Channel"/>
</dbReference>
<dbReference type="InterPro" id="IPR049371">
    <property type="entry name" value="GspD-like_N0"/>
</dbReference>
<dbReference type="InterPro" id="IPR001775">
    <property type="entry name" value="GspD/PilQ"/>
</dbReference>
<dbReference type="InterPro" id="IPR005644">
    <property type="entry name" value="NolW-like"/>
</dbReference>
<dbReference type="InterPro" id="IPR038591">
    <property type="entry name" value="NolW-like_sf"/>
</dbReference>
<dbReference type="InterPro" id="IPR004846">
    <property type="entry name" value="T2SS/T3SS_dom"/>
</dbReference>
<dbReference type="InterPro" id="IPR013356">
    <property type="entry name" value="T2SS_GspD"/>
</dbReference>
<dbReference type="InterPro" id="IPR004845">
    <property type="entry name" value="T2SS_GspD_CS"/>
</dbReference>
<dbReference type="NCBIfam" id="TIGR02517">
    <property type="entry name" value="type_II_gspD"/>
    <property type="match status" value="1"/>
</dbReference>
<dbReference type="PANTHER" id="PTHR30332">
    <property type="entry name" value="PROBABLE GENERAL SECRETION PATHWAY PROTEIN D"/>
    <property type="match status" value="1"/>
</dbReference>
<dbReference type="PANTHER" id="PTHR30332:SF24">
    <property type="entry name" value="SECRETIN GSPD-RELATED"/>
    <property type="match status" value="1"/>
</dbReference>
<dbReference type="Pfam" id="PF00263">
    <property type="entry name" value="Secretin"/>
    <property type="match status" value="1"/>
</dbReference>
<dbReference type="Pfam" id="PF03958">
    <property type="entry name" value="Secretin_N"/>
    <property type="match status" value="3"/>
</dbReference>
<dbReference type="Pfam" id="PF21305">
    <property type="entry name" value="type_II_gspD_N0"/>
    <property type="match status" value="1"/>
</dbReference>
<dbReference type="PRINTS" id="PR00811">
    <property type="entry name" value="BCTERIALGSPD"/>
</dbReference>
<dbReference type="PROSITE" id="PS00875">
    <property type="entry name" value="T2SP_D"/>
    <property type="match status" value="1"/>
</dbReference>
<protein>
    <recommendedName>
        <fullName>Secretin ExeD</fullName>
    </recommendedName>
    <alternativeName>
        <fullName>General secretion pathway protein D</fullName>
    </alternativeName>
    <alternativeName>
        <fullName>Type II secretion system protein D</fullName>
        <shortName>T2SS protein D</shortName>
    </alternativeName>
</protein>
<proteinExistence type="inferred from homology"/>
<organism>
    <name type="scientific">Aeromonas salmonicida</name>
    <dbReference type="NCBI Taxonomy" id="645"/>
    <lineage>
        <taxon>Bacteria</taxon>
        <taxon>Pseudomonadati</taxon>
        <taxon>Pseudomonadota</taxon>
        <taxon>Gammaproteobacteria</taxon>
        <taxon>Aeromonadales</taxon>
        <taxon>Aeromonadaceae</taxon>
        <taxon>Aeromonas</taxon>
    </lineage>
</organism>
<keyword id="KW-0998">Cell outer membrane</keyword>
<keyword id="KW-0472">Membrane</keyword>
<keyword id="KW-0653">Protein transport</keyword>
<keyword id="KW-0732">Signal</keyword>
<keyword id="KW-0812">Transmembrane</keyword>
<keyword id="KW-1134">Transmembrane beta strand</keyword>
<keyword id="KW-0813">Transport</keyword>
<feature type="signal peptide" evidence="3">
    <location>
        <begin position="1"/>
        <end position="25"/>
    </location>
</feature>
<feature type="chain" id="PRO_0000013098" description="Secretin ExeD">
    <location>
        <begin position="26"/>
        <end position="678"/>
    </location>
</feature>
<feature type="region of interest" description="N0" evidence="2">
    <location>
        <begin position="26"/>
        <end position="122"/>
    </location>
</feature>
<feature type="region of interest" description="N1" evidence="2">
    <location>
        <begin position="124"/>
        <end position="188"/>
    </location>
</feature>
<feature type="region of interest" description="N2" evidence="2">
    <location>
        <begin position="189"/>
        <end position="264"/>
    </location>
</feature>
<feature type="region of interest" description="N3" evidence="2">
    <location>
        <begin position="267"/>
        <end position="347"/>
    </location>
</feature>
<feature type="region of interest" description="Secretin" evidence="2">
    <location>
        <begin position="352"/>
        <end position="602"/>
    </location>
</feature>
<feature type="region of interest" description="S domain" evidence="2">
    <location>
        <begin position="604"/>
        <end position="678"/>
    </location>
</feature>
<feature type="site" description="May serve as a pivot that allows opening of the central gate for substrate egress" evidence="2">
    <location>
        <position position="463"/>
    </location>
</feature>
<sequence length="678" mass="72768">MINKGKSWRLATVAAALMMAGSAWATEYSASFKNADIEEFINTVGKNLSKTIIIEPSVRGKINVRSYDLLNEEQYYQFFLSVLDVYGFAVVPMDNGVLKVVRSKDAKTSAIPVVDETNPGIGDEMVTRVVPVRNVSVRELAPLLRQLNDNAGGGNVVHYDPSNVLLITGRAAVVNRLVEVVRRVDKAGDQEVDIIKLRYASAGEMVRLVTNLNKDGNTQGGNTSLLLAPKVVADERTNSVVVSGEPKARARIIQMVRQLDRDLQSQGNTRVFYLKYGKAKDMVEVLKGVSTSIEADKKGGGTTAGGGNASIGGGKLAISADETTNALVITAQPDVMAELEQVVAKLDIRRAQVLVEAIIVEIADGDGLNLGVQWANTNGGGTQFTDTNLPIGSVAIAAKDYNENGTTTGLADLAKGFNGMAAGFYHGNWAALVTALSTSTKSDILSTPSIVTMDNKEASFNVGQEVPVQSGSQSSTTSDQVFNTIERKTVGTKLTVTPQINEGDSVLLNIEQEVSSVAQKQATGTADLGPTFDTRTIKNAVLVKSGETVVLGGLMDEQTQEKVSKVPLLGDIPVLGYLFRSTNNTTSKRNLMVFIRPTILRDAHVYSGISSNKYTMFRAEQLDAAAQESYLTSPKRQVLPEYGQDVAQSPEVQKQIELMKARQQATADGAQPFVQGNK</sequence>
<name>GSPD_AERSA</name>
<comment type="function">
    <text evidence="1 2">Involved in a type II secretion system (T2SS, formerly general secretion pathway, GSP) for the export of proteins (By similarity). This subunit forms the outer membrane channel (By similarity).</text>
</comment>
<comment type="subunit">
    <text evidence="2">Forms a cylindrical channel with 15 subunits.</text>
</comment>
<comment type="subcellular location">
    <subcellularLocation>
        <location evidence="1">Cell outer membrane</location>
    </subcellularLocation>
    <text evidence="2">Most of the protein is in the periplasm which it traverses to contact proteins of the cell inner membrane.</text>
</comment>
<comment type="domain">
    <text evidence="2">The N0, N1, N2 and N3 domains are periplasmic, while the secretin and S domains form a channel that is partially inserted in the outer membrane. The N1, N2 and N3 domains each form a periplasmic ring. The secretin domain forms a double beta-barrel structure; the outer barrel has a diameter of about 110 Angstroms while the inner barrel forms the central gate with a small pore in the closed state.</text>
</comment>
<comment type="similarity">
    <text evidence="4">Belongs to the bacterial secretin family. GSP D subfamily.</text>
</comment>